<protein>
    <recommendedName>
        <fullName>Protein crossbronx</fullName>
    </recommendedName>
</protein>
<name>AKTP1_DROWI</name>
<dbReference type="EMBL" id="CH963849">
    <property type="protein sequence ID" value="EDW74520.1"/>
    <property type="molecule type" value="Genomic_DNA"/>
</dbReference>
<dbReference type="SMR" id="B4MQY1"/>
<dbReference type="STRING" id="7260.B4MQY1"/>
<dbReference type="EnsemblMetazoa" id="FBtr0252008">
    <property type="protein sequence ID" value="FBpp0250500"/>
    <property type="gene ID" value="FBgn0223349"/>
</dbReference>
<dbReference type="EnsemblMetazoa" id="XM_002063498.4">
    <property type="protein sequence ID" value="XP_002063534.1"/>
    <property type="gene ID" value="LOC6640665"/>
</dbReference>
<dbReference type="GeneID" id="6640665"/>
<dbReference type="KEGG" id="dwi:6640665"/>
<dbReference type="CTD" id="47272"/>
<dbReference type="eggNOG" id="KOG0429">
    <property type="taxonomic scope" value="Eukaryota"/>
</dbReference>
<dbReference type="HOGENOM" id="CLU_083049_1_0_1"/>
<dbReference type="OMA" id="WGFPEWR"/>
<dbReference type="OrthoDB" id="5596422at2759"/>
<dbReference type="PhylomeDB" id="B4MQY1"/>
<dbReference type="ChiTaRS" id="Ubx">
    <property type="organism name" value="fly"/>
</dbReference>
<dbReference type="Proteomes" id="UP000007798">
    <property type="component" value="Unassembled WGS sequence"/>
</dbReference>
<dbReference type="CDD" id="cd23814">
    <property type="entry name" value="UEV_AKTIP"/>
    <property type="match status" value="1"/>
</dbReference>
<dbReference type="FunFam" id="3.10.110.10:FF:000121">
    <property type="entry name" value="Protein crossbronx"/>
    <property type="match status" value="1"/>
</dbReference>
<dbReference type="Gene3D" id="3.10.110.10">
    <property type="entry name" value="Ubiquitin Conjugating Enzyme"/>
    <property type="match status" value="1"/>
</dbReference>
<dbReference type="InterPro" id="IPR050113">
    <property type="entry name" value="Ub_conjugating_enzyme"/>
</dbReference>
<dbReference type="InterPro" id="IPR000608">
    <property type="entry name" value="UBQ-conjugat_E2_core"/>
</dbReference>
<dbReference type="InterPro" id="IPR016135">
    <property type="entry name" value="UBQ-conjugating_enzyme/RWD"/>
</dbReference>
<dbReference type="PANTHER" id="PTHR24067">
    <property type="entry name" value="UBIQUITIN-CONJUGATING ENZYME E2"/>
    <property type="match status" value="1"/>
</dbReference>
<dbReference type="Pfam" id="PF00179">
    <property type="entry name" value="UQ_con"/>
    <property type="match status" value="1"/>
</dbReference>
<dbReference type="SMART" id="SM00212">
    <property type="entry name" value="UBCc"/>
    <property type="match status" value="1"/>
</dbReference>
<dbReference type="SUPFAM" id="SSF54495">
    <property type="entry name" value="UBC-like"/>
    <property type="match status" value="1"/>
</dbReference>
<dbReference type="PROSITE" id="PS50127">
    <property type="entry name" value="UBC_2"/>
    <property type="match status" value="1"/>
</dbReference>
<feature type="chain" id="PRO_0000379039" description="Protein crossbronx">
    <location>
        <begin position="1"/>
        <end position="251"/>
    </location>
</feature>
<feature type="domain" description="UBC core" evidence="1">
    <location>
        <begin position="20"/>
        <end position="176"/>
    </location>
</feature>
<feature type="region of interest" description="Disordered" evidence="2">
    <location>
        <begin position="211"/>
        <end position="251"/>
    </location>
</feature>
<feature type="compositionally biased region" description="Gly residues" evidence="2">
    <location>
        <begin position="225"/>
        <end position="234"/>
    </location>
</feature>
<proteinExistence type="inferred from homology"/>
<comment type="similarity">
    <text evidence="1">Belongs to the ubiquitin-conjugating enzyme family. FTS subfamily.</text>
</comment>
<comment type="caution">
    <text evidence="3">Lacks the conserved Cys residue necessary for ubiquitin-conjugating enzyme E2 activity.</text>
</comment>
<reference key="1">
    <citation type="journal article" date="2007" name="Nature">
        <title>Evolution of genes and genomes on the Drosophila phylogeny.</title>
        <authorList>
            <consortium name="Drosophila 12 genomes consortium"/>
        </authorList>
    </citation>
    <scope>NUCLEOTIDE SEQUENCE [LARGE SCALE GENOMIC DNA]</scope>
    <source>
        <strain>Tucson 14030-0811.24</strain>
    </source>
</reference>
<evidence type="ECO:0000255" key="1">
    <source>
        <dbReference type="PROSITE-ProRule" id="PRU00388"/>
    </source>
</evidence>
<evidence type="ECO:0000256" key="2">
    <source>
        <dbReference type="SAM" id="MobiDB-lite"/>
    </source>
</evidence>
<evidence type="ECO:0000305" key="3"/>
<organism>
    <name type="scientific">Drosophila willistoni</name>
    <name type="common">Fruit fly</name>
    <dbReference type="NCBI Taxonomy" id="7260"/>
    <lineage>
        <taxon>Eukaryota</taxon>
        <taxon>Metazoa</taxon>
        <taxon>Ecdysozoa</taxon>
        <taxon>Arthropoda</taxon>
        <taxon>Hexapoda</taxon>
        <taxon>Insecta</taxon>
        <taxon>Pterygota</taxon>
        <taxon>Neoptera</taxon>
        <taxon>Endopterygota</taxon>
        <taxon>Diptera</taxon>
        <taxon>Brachycera</taxon>
        <taxon>Muscomorpha</taxon>
        <taxon>Ephydroidea</taxon>
        <taxon>Drosophilidae</taxon>
        <taxon>Drosophila</taxon>
        <taxon>Sophophora</taxon>
    </lineage>
</organism>
<keyword id="KW-1185">Reference proteome</keyword>
<accession>B4MQY1</accession>
<sequence length="251" mass="28648">MTLDLDASKKDDKLLLTTVQQEYKILAEYKMIESEKIGGVYVIPSYANSLQWFGVFFGRKDFYSEGVFRFTLLLPDRFPDDKTLPSIIFQQKIFHPLICPYTHSLDISHAFPEWRCGDDHLWQLLKYMQAVFSDPLESIRHVEMDKLKNSEAADLLINNREEFANRTRENIRESLAHIYDTPITEDPHYITFEKFQSEVHGPVLEGIKAGQSKHLESQSQQSNNGGNGGGGGAATGLSWVKEGEFKPLSVE</sequence>
<gene>
    <name type="primary">cbx</name>
    <name type="ORF">GK21357</name>
</gene>